<dbReference type="EC" id="1.3.99.4" evidence="2"/>
<dbReference type="EMBL" id="AE000516">
    <property type="protein sequence ID" value="AAK48000.1"/>
    <property type="molecule type" value="Genomic_DNA"/>
</dbReference>
<dbReference type="SMR" id="Q7D5C1"/>
<dbReference type="KEGG" id="mtc:MT3641"/>
<dbReference type="HOGENOM" id="CLU_011398_4_2_11"/>
<dbReference type="Proteomes" id="UP000001020">
    <property type="component" value="Chromosome"/>
</dbReference>
<dbReference type="GO" id="GO:0047571">
    <property type="term" value="F:3-oxosteroid 1-dehydrogenase activity"/>
    <property type="evidence" value="ECO:0007669"/>
    <property type="project" value="UniProtKB-EC"/>
</dbReference>
<dbReference type="GO" id="GO:0033765">
    <property type="term" value="F:steroid dehydrogenase activity, acting on the CH-CH group of donors"/>
    <property type="evidence" value="ECO:0000314"/>
    <property type="project" value="UniProtKB"/>
</dbReference>
<dbReference type="GO" id="GO:0016042">
    <property type="term" value="P:lipid catabolic process"/>
    <property type="evidence" value="ECO:0007669"/>
    <property type="project" value="UniProtKB-KW"/>
</dbReference>
<dbReference type="GO" id="GO:0006694">
    <property type="term" value="P:steroid biosynthetic process"/>
    <property type="evidence" value="ECO:0000314"/>
    <property type="project" value="UniProtKB"/>
</dbReference>
<dbReference type="FunFam" id="3.50.50.60:FF:000208">
    <property type="entry name" value="3-ketosteroid dehydrogenase"/>
    <property type="match status" value="1"/>
</dbReference>
<dbReference type="FunFam" id="3.50.50.60:FF:000130">
    <property type="entry name" value="3-oxosteroid 1-dehydrogenase"/>
    <property type="match status" value="1"/>
</dbReference>
<dbReference type="Gene3D" id="3.50.50.60">
    <property type="entry name" value="FAD/NAD(P)-binding domain"/>
    <property type="match status" value="2"/>
</dbReference>
<dbReference type="Gene3D" id="3.90.700.10">
    <property type="entry name" value="Succinate dehydrogenase/fumarate reductase flavoprotein, catalytic domain"/>
    <property type="match status" value="1"/>
</dbReference>
<dbReference type="InterPro" id="IPR003953">
    <property type="entry name" value="FAD-dep_OxRdtase_2_FAD-bd"/>
</dbReference>
<dbReference type="InterPro" id="IPR050315">
    <property type="entry name" value="FAD-oxidoreductase_2"/>
</dbReference>
<dbReference type="InterPro" id="IPR036188">
    <property type="entry name" value="FAD/NAD-bd_sf"/>
</dbReference>
<dbReference type="InterPro" id="IPR027477">
    <property type="entry name" value="Succ_DH/fumarate_Rdtase_cat_sf"/>
</dbReference>
<dbReference type="NCBIfam" id="NF005882">
    <property type="entry name" value="PRK07843.1"/>
    <property type="match status" value="1"/>
</dbReference>
<dbReference type="PANTHER" id="PTHR43400:SF10">
    <property type="entry name" value="3-OXOSTEROID 1-DEHYDROGENASE"/>
    <property type="match status" value="1"/>
</dbReference>
<dbReference type="PANTHER" id="PTHR43400">
    <property type="entry name" value="FUMARATE REDUCTASE"/>
    <property type="match status" value="1"/>
</dbReference>
<dbReference type="Pfam" id="PF00890">
    <property type="entry name" value="FAD_binding_2"/>
    <property type="match status" value="1"/>
</dbReference>
<dbReference type="PRINTS" id="PR00411">
    <property type="entry name" value="PNDRDTASEI"/>
</dbReference>
<dbReference type="SUPFAM" id="SSF51905">
    <property type="entry name" value="FAD/NAD(P)-binding domain"/>
    <property type="match status" value="1"/>
</dbReference>
<dbReference type="SUPFAM" id="SSF56425">
    <property type="entry name" value="Succinate dehydrogenase/fumarate reductase flavoprotein, catalytic domain"/>
    <property type="match status" value="1"/>
</dbReference>
<sequence>MFYMTVQEFDVVVVGSGAAGMVAALVAAHRGLSTVVVEKAPHYGGSTARSGGGVWIPNNEVLKRRGVRDTPEAARTYLHGIVGEIVEPERIDAYLDRGPEMLSFVLKHTPLKMCWVPGYSDYYPEAPGGRPGGRSIEPKPFNARKLGADMAGLEPAYGKVPLNVVVMQQDYVRLNQLKRHPRGVLRSMKVGARTMWAKATGKNLVGMGRALIGPLRIGLQRAGVPVELNTAFTDLFVENGVVSGVYVRDSHEAESAEPQLIRARRGVILACGGFEHNEQMRIKYQRAPITTEWTVGASANTGDGILAAEKLGAALDLMDDAWWGPTVPLVGKPWFALSERNSPGSIIVNMSGKRFMNESMPYVEACHHMYGGEHGQGPGPGENIPAWLVFDQRYRDRYIFAGLQPGQRIPSRWLDSGVIVQADTLAELAGKAGLPADELTATVQRFNAFARSGVDEDYHRGESAYDRYYGDPSNKPNPNLGEVGHPPYYGAKMVPGDLGTKGGIRTDVNGRALRDDGSIIDGLYAAGNVSAPVMGHTYPGPGGTIGPAMTFGYLAALHIADQAGKR</sequence>
<proteinExistence type="inferred from homology"/>
<accession>Q7D5C1</accession>
<gene>
    <name type="primary">kstD</name>
    <name type="ordered locus">MT3641</name>
</gene>
<evidence type="ECO:0000250" key="1"/>
<evidence type="ECO:0000250" key="2">
    <source>
        <dbReference type="UniProtKB" id="P71864"/>
    </source>
</evidence>
<evidence type="ECO:0000269" key="3">
    <source>
    </source>
</evidence>
<evidence type="ECO:0000305" key="4"/>
<reference key="1">
    <citation type="journal article" date="2002" name="J. Bacteriol.">
        <title>Whole-genome comparison of Mycobacterium tuberculosis clinical and laboratory strains.</title>
        <authorList>
            <person name="Fleischmann R.D."/>
            <person name="Alland D."/>
            <person name="Eisen J.A."/>
            <person name="Carpenter L."/>
            <person name="White O."/>
            <person name="Peterson J.D."/>
            <person name="DeBoy R.T."/>
            <person name="Dodson R.J."/>
            <person name="Gwinn M.L."/>
            <person name="Haft D.H."/>
            <person name="Hickey E.K."/>
            <person name="Kolonay J.F."/>
            <person name="Nelson W.C."/>
            <person name="Umayam L.A."/>
            <person name="Ermolaeva M.D."/>
            <person name="Salzberg S.L."/>
            <person name="Delcher A."/>
            <person name="Utterback T.R."/>
            <person name="Weidman J.F."/>
            <person name="Khouri H.M."/>
            <person name="Gill J."/>
            <person name="Mikula A."/>
            <person name="Bishai W."/>
            <person name="Jacobs W.R. Jr."/>
            <person name="Venter J.C."/>
            <person name="Fraser C.M."/>
        </authorList>
    </citation>
    <scope>NUCLEOTIDE SEQUENCE [LARGE SCALE GENOMIC DNA]</scope>
    <source>
        <strain>CDC 1551 / Oshkosh</strain>
    </source>
</reference>
<reference key="2">
    <citation type="journal article" date="2005" name="Microbiology">
        <title>Identification and targeted disruption of the gene encoding the main 3-ketosteroid dehydrogenase in Mycobacterium smegmatis.</title>
        <authorList>
            <person name="Brzostek A."/>
            <person name="Sliwinski T."/>
            <person name="Rumijowska-Galewicz A."/>
            <person name="Korycka-Machala M."/>
            <person name="Dziadek J."/>
        </authorList>
    </citation>
    <scope>FUNCTION</scope>
</reference>
<organism>
    <name type="scientific">Mycobacterium tuberculosis (strain CDC 1551 / Oshkosh)</name>
    <dbReference type="NCBI Taxonomy" id="83331"/>
    <lineage>
        <taxon>Bacteria</taxon>
        <taxon>Bacillati</taxon>
        <taxon>Actinomycetota</taxon>
        <taxon>Actinomycetes</taxon>
        <taxon>Mycobacteriales</taxon>
        <taxon>Mycobacteriaceae</taxon>
        <taxon>Mycobacterium</taxon>
        <taxon>Mycobacterium tuberculosis complex</taxon>
    </lineage>
</organism>
<feature type="chain" id="PRO_0000403953" description="3-oxosteroid 1-dehydrogenase">
    <location>
        <begin position="1"/>
        <end position="566"/>
    </location>
</feature>
<feature type="binding site" evidence="1">
    <location>
        <begin position="10"/>
        <end position="39"/>
    </location>
    <ligand>
        <name>FAD</name>
        <dbReference type="ChEBI" id="CHEBI:57692"/>
    </ligand>
</feature>
<keyword id="KW-0274">FAD</keyword>
<keyword id="KW-0285">Flavoprotein</keyword>
<keyword id="KW-0442">Lipid degradation</keyword>
<keyword id="KW-0443">Lipid metabolism</keyword>
<keyword id="KW-0560">Oxidoreductase</keyword>
<keyword id="KW-1185">Reference proteome</keyword>
<keyword id="KW-0753">Steroid metabolism</keyword>
<comment type="function">
    <text evidence="2 3">Involved in the degradation of cholesterol (PubMed:16000729). Catalyzes the elimination of the C-1 and C-2 hydrogen atoms of the A-ring from the polycyclic ring structure of 3-ketosteroids (By similarity). Is also involved in the formation of 3-keto-1,4-diene-steroid from 3-keto-4-ene-steroid (By similarity).</text>
</comment>
<comment type="catalytic activity">
    <reaction evidence="2">
        <text>a 3-oxosteroid + A = a 3-oxo-Delta(1)-steroid + AH2</text>
        <dbReference type="Rhea" id="RHEA:13329"/>
        <dbReference type="ChEBI" id="CHEBI:13193"/>
        <dbReference type="ChEBI" id="CHEBI:17499"/>
        <dbReference type="ChEBI" id="CHEBI:20156"/>
        <dbReference type="ChEBI" id="CHEBI:47788"/>
        <dbReference type="EC" id="1.3.99.4"/>
    </reaction>
</comment>
<comment type="catalytic activity">
    <reaction evidence="2">
        <text>a 3-oxo-Delta(4)-steroid + A = a 3-oxo-Delta(1,4)-steroid + AH2</text>
        <dbReference type="Rhea" id="RHEA:53132"/>
        <dbReference type="ChEBI" id="CHEBI:13193"/>
        <dbReference type="ChEBI" id="CHEBI:17499"/>
        <dbReference type="ChEBI" id="CHEBI:47909"/>
        <dbReference type="ChEBI" id="CHEBI:77166"/>
    </reaction>
</comment>
<comment type="cofactor">
    <cofactor evidence="1">
        <name>FAD</name>
        <dbReference type="ChEBI" id="CHEBI:57692"/>
    </cofactor>
</comment>
<comment type="similarity">
    <text evidence="4">Belongs to the FAD-dependent oxidoreductase 2 family. 3-oxosteroid dehydrogenase subfamily.</text>
</comment>
<protein>
    <recommendedName>
        <fullName>3-oxosteroid 1-dehydrogenase</fullName>
        <ecNumber evidence="2">1.3.99.4</ecNumber>
    </recommendedName>
    <alternativeName>
        <fullName>3-keto-Delta(4)-steroid Delta(1)-dehydrogenase</fullName>
        <shortName>KSDD</shortName>
    </alternativeName>
    <alternativeName>
        <fullName>3-oxo-Delta(4)-steroid 1-dehydrogenase</fullName>
        <shortName>KSTD</shortName>
    </alternativeName>
</protein>
<name>3O1D_MYCTO</name>